<evidence type="ECO:0000250" key="1"/>
<evidence type="ECO:0000250" key="2">
    <source>
        <dbReference type="UniProtKB" id="P32436"/>
    </source>
</evidence>
<evidence type="ECO:0000255" key="3">
    <source>
        <dbReference type="PROSITE-ProRule" id="PRU00815"/>
    </source>
</evidence>
<evidence type="ECO:0000269" key="4">
    <source>
    </source>
</evidence>
<proteinExistence type="inferred from homology"/>
<name>DEGV1_STRGN</name>
<accession>Q4L2X1</accession>
<reference key="1">
    <citation type="journal article" date="2005" name="J. Bacteriol.">
        <title>Two additional components of the accessory sec system mediating export of the Streptococcus gordonii platelet-binding protein GspB.</title>
        <authorList>
            <person name="Takamatsu D."/>
            <person name="Bensing B.A."/>
            <person name="Sullam P.M."/>
        </authorList>
    </citation>
    <scope>NUCLEOTIDE SEQUENCE [GENOMIC DNA]</scope>
    <scope>DISRUPTION PHENOTYPE</scope>
    <source>
        <strain>M99</strain>
    </source>
</reference>
<sequence>MTWKIVSDSGCDFRELKDLALDTNFENVPLTIQVGQEIFIDNAELNIDLMMEKMYATSTASKSACPSPDDYLKAFAGADNIFVVTITGTLSGSHNSAQVAKKLYLEEHPNVNIHVIDSLSAGGEVDLLVQKLNQLISNGLSFDEIVQEITNYQSKTKLLFVLAKVDNLVKNGRLNKLIGAVVGLPNIRMVGEAGPQGTLELLQKARGYKKSLSAAFEEIIKAGYAGGEIIISHRNNDKFCQQFSDLVKEKFPNAQIQAIPTSGLCSFYAEEGGLLMGYEIG</sequence>
<keyword id="KW-0446">Lipid-binding</keyword>
<organism>
    <name type="scientific">Streptococcus gordonii</name>
    <dbReference type="NCBI Taxonomy" id="1302"/>
    <lineage>
        <taxon>Bacteria</taxon>
        <taxon>Bacillati</taxon>
        <taxon>Bacillota</taxon>
        <taxon>Bacilli</taxon>
        <taxon>Lactobacillales</taxon>
        <taxon>Streptococcaceae</taxon>
        <taxon>Streptococcus</taxon>
    </lineage>
</organism>
<dbReference type="EMBL" id="AY028381">
    <property type="protein sequence ID" value="AAY99445.1"/>
    <property type="molecule type" value="Genomic_DNA"/>
</dbReference>
<dbReference type="SMR" id="Q4L2X1"/>
<dbReference type="GO" id="GO:0008289">
    <property type="term" value="F:lipid binding"/>
    <property type="evidence" value="ECO:0007669"/>
    <property type="project" value="UniProtKB-KW"/>
</dbReference>
<dbReference type="Gene3D" id="3.30.1180.10">
    <property type="match status" value="1"/>
</dbReference>
<dbReference type="Gene3D" id="2.20.28.50">
    <property type="entry name" value="degv family protein"/>
    <property type="match status" value="1"/>
</dbReference>
<dbReference type="Gene3D" id="3.40.50.10440">
    <property type="entry name" value="Dihydroxyacetone kinase, domain 1"/>
    <property type="match status" value="1"/>
</dbReference>
<dbReference type="InterPro" id="IPR003797">
    <property type="entry name" value="DegV"/>
</dbReference>
<dbReference type="InterPro" id="IPR043168">
    <property type="entry name" value="DegV_C"/>
</dbReference>
<dbReference type="InterPro" id="IPR050270">
    <property type="entry name" value="DegV_domain_contain"/>
</dbReference>
<dbReference type="NCBIfam" id="TIGR00762">
    <property type="entry name" value="DegV"/>
    <property type="match status" value="1"/>
</dbReference>
<dbReference type="PANTHER" id="PTHR33434">
    <property type="entry name" value="DEGV DOMAIN-CONTAINING PROTEIN DR_1986-RELATED"/>
    <property type="match status" value="1"/>
</dbReference>
<dbReference type="PANTHER" id="PTHR33434:SF2">
    <property type="entry name" value="FATTY ACID-BINDING PROTEIN TM_1468"/>
    <property type="match status" value="1"/>
</dbReference>
<dbReference type="Pfam" id="PF02645">
    <property type="entry name" value="DegV"/>
    <property type="match status" value="1"/>
</dbReference>
<dbReference type="SUPFAM" id="SSF82549">
    <property type="entry name" value="DAK1/DegV-like"/>
    <property type="match status" value="1"/>
</dbReference>
<dbReference type="PROSITE" id="PS51482">
    <property type="entry name" value="DEGV"/>
    <property type="match status" value="1"/>
</dbReference>
<feature type="chain" id="PRO_0000414191" description="DegV domain-containing protein">
    <location>
        <begin position="1"/>
        <end position="281"/>
    </location>
</feature>
<feature type="domain" description="DegV" evidence="3">
    <location>
        <begin position="3"/>
        <end position="280"/>
    </location>
</feature>
<feature type="binding site" evidence="2">
    <location>
        <position position="63"/>
    </location>
    <ligand>
        <name>hexadecanoate</name>
        <dbReference type="ChEBI" id="CHEBI:7896"/>
    </ligand>
</feature>
<feature type="binding site" evidence="2">
    <location>
        <position position="91"/>
    </location>
    <ligand>
        <name>hexadecanoate</name>
        <dbReference type="ChEBI" id="CHEBI:7896"/>
    </ligand>
</feature>
<protein>
    <recommendedName>
        <fullName>DegV domain-containing protein</fullName>
    </recommendedName>
    <alternativeName>
        <fullName>Orf7</fullName>
    </alternativeName>
</protein>
<comment type="function">
    <text evidence="1">May bind long-chain fatty acids, such as palmitate, and may play a role in lipid transport or fatty acid metabolism.</text>
</comment>
<comment type="disruption phenotype">
    <text evidence="4">No effect on export of cell wall protein GspB.</text>
</comment>